<comment type="function">
    <text evidence="3 4 5 9 10">Cytochrome P450 monooxygenase; part of the gene cluster that mediates the biosynthesis of a tyrosine-derived cytochalasan acting as a fungal signal recognized by resistant rice plants and leads to avirulence in Pi33 resistant rice cultivars (PubMed:18433432, PubMed:31644300). The first step in the pathway is catalyzed by the hybrid PKS-NRPS ACE1, assisted by the enoyl reductase RAP1, that are responsible for fusion of the tyrosine precursor and the polyketide backbone (PubMed:29142718). The polyketide synthase module (PKS) of ACE1 is responsible for the synthesis of the polyketide backbone and the downstream nonribosomal peptide synthetase (NRPS) amidates the carboxyl end of the polyketide with the tyrosine precursor (PubMed:29142718). Because ACE1 lacks a designated enoylreductase (ER) domain, the required activity is provided the enoyl reductase RAP1 (PubMed:29142718). Reduction by the hydrolyase ORFZ, followed by dehydration and intra-molecular Diels-Alder cyclization by the Diels-Alderase ORF3 then yield the required isoindolone-fused macrocycle (Probable). A number of oxidative steps catalyzed by the tailoring enzymes identified within the cluster, including cytochrome P450 monooxygenases CYP1 to CYP4, the FAD-linked oxidoreductase OXR2 and the short-chain dehydrogenase/reductase OXR1, are further required to afford the final cytochalasans that confer avirulence and which have still to be identified (Probable). The monooxygenase CYP1 has been shown to be a site-selective C-18 hydroxylase whereas the function of CYP3 is the site-selective epoxidation of the C-6/C-7 olefin that is present in some intermediate compounds (PubMed:31644300). Finally, SYN2 and RAP2 are not required for avirulence in Pi33 resistant rice cultivars (PubMed:18433432).</text>
</comment>
<comment type="cofactor">
    <cofactor evidence="1">
        <name>heme</name>
        <dbReference type="ChEBI" id="CHEBI:30413"/>
    </cofactor>
</comment>
<comment type="pathway">
    <text evidence="5 9">Secondary metabolite biosynthesis.</text>
</comment>
<comment type="induction">
    <text evidence="3">Expressed exclusively during fungal penetration of host leaves, the time point at which plant defense reactions are triggered.</text>
</comment>
<comment type="similarity">
    <text evidence="8">Belongs to the cytochrome P450 family.</text>
</comment>
<reference key="1">
    <citation type="journal article" date="2005" name="Nature">
        <title>The genome sequence of the rice blast fungus Magnaporthe grisea.</title>
        <authorList>
            <person name="Dean R.A."/>
            <person name="Talbot N.J."/>
            <person name="Ebbole D.J."/>
            <person name="Farman M.L."/>
            <person name="Mitchell T.K."/>
            <person name="Orbach M.J."/>
            <person name="Thon M.R."/>
            <person name="Kulkarni R."/>
            <person name="Xu J.-R."/>
            <person name="Pan H."/>
            <person name="Read N.D."/>
            <person name="Lee Y.-H."/>
            <person name="Carbone I."/>
            <person name="Brown D."/>
            <person name="Oh Y.Y."/>
            <person name="Donofrio N."/>
            <person name="Jeong J.S."/>
            <person name="Soanes D.M."/>
            <person name="Djonovic S."/>
            <person name="Kolomiets E."/>
            <person name="Rehmeyer C."/>
            <person name="Li W."/>
            <person name="Harding M."/>
            <person name="Kim S."/>
            <person name="Lebrun M.-H."/>
            <person name="Bohnert H."/>
            <person name="Coughlan S."/>
            <person name="Butler J."/>
            <person name="Calvo S.E."/>
            <person name="Ma L.-J."/>
            <person name="Nicol R."/>
            <person name="Purcell S."/>
            <person name="Nusbaum C."/>
            <person name="Galagan J.E."/>
            <person name="Birren B.W."/>
        </authorList>
    </citation>
    <scope>NUCLEOTIDE SEQUENCE [LARGE SCALE GENOMIC DNA]</scope>
    <source>
        <strain>70-15 / ATCC MYA-4617 / FGSC 8958</strain>
    </source>
</reference>
<reference key="2">
    <citation type="journal article" date="2008" name="New Phytol.">
        <title>Magnaporthe grisea avirulence gene ACE1 belongs to an infection-specific gene cluster involved in secondary metabolism.</title>
        <authorList>
            <person name="Collemare J."/>
            <person name="Pianfetti M."/>
            <person name="Houlle A.E."/>
            <person name="Morin D."/>
            <person name="Camborde L."/>
            <person name="Gagey M.J."/>
            <person name="Barbisan C."/>
            <person name="Fudal I."/>
            <person name="Lebrun M.H."/>
            <person name="Boehnert H.U."/>
        </authorList>
    </citation>
    <scope>FUNCTION</scope>
    <scope>INDUCTION</scope>
    <scope>PATHWAY</scope>
</reference>
<reference key="3">
    <citation type="journal article" date="2015" name="Chem. Sci.">
        <title>Heterologous expression of the avirulence gene ACE1 from the fungal rice pathogen Magnaporthe oryzae.</title>
        <authorList>
            <person name="Song Z."/>
            <person name="Bakeer W."/>
            <person name="Marshall J.W."/>
            <person name="Yakasai A.A."/>
            <person name="Khalid R.M."/>
            <person name="Collemare J."/>
            <person name="Skellam E."/>
            <person name="Tharreau D."/>
            <person name="Lebrun M.H."/>
            <person name="Lazarus C.M."/>
            <person name="Bailey A.M."/>
            <person name="Simpson T.J."/>
            <person name="Cox R.J."/>
        </authorList>
    </citation>
    <scope>FUNCTION</scope>
</reference>
<reference key="4">
    <citation type="journal article" date="2019" name="Org. Lett.">
        <title>Investigating the function of cryptic cytochalasan cytochrome P450 monooxygenases using combinatorial biosynthesis.</title>
        <authorList>
            <person name="Wang C."/>
            <person name="Becker K."/>
            <person name="Pfuetze S."/>
            <person name="Kuhnert E."/>
            <person name="Stadler M."/>
            <person name="Cox R.J."/>
            <person name="Skellam E."/>
        </authorList>
    </citation>
    <scope>FUNCTION</scope>
    <scope>CATALYTIC ACTIVITY</scope>
    <scope>PATHWAY</scope>
</reference>
<gene>
    <name evidence="6" type="primary">CYP3</name>
    <name type="ORF">MGG_08379</name>
</gene>
<proteinExistence type="evidence at protein level"/>
<dbReference type="EC" id="1.-.-.-" evidence="9"/>
<dbReference type="EMBL" id="CM001232">
    <property type="protein sequence ID" value="EHA55872.1"/>
    <property type="molecule type" value="Genomic_DNA"/>
</dbReference>
<dbReference type="RefSeq" id="XP_003715679.1">
    <property type="nucleotide sequence ID" value="XM_003715631.1"/>
</dbReference>
<dbReference type="SMR" id="G4MWB2"/>
<dbReference type="EnsemblFungi" id="MGG_08379T0">
    <property type="protein sequence ID" value="MGG_08379T0"/>
    <property type="gene ID" value="MGG_08379"/>
</dbReference>
<dbReference type="GeneID" id="2678569"/>
<dbReference type="KEGG" id="mgr:MGG_08379"/>
<dbReference type="VEuPathDB" id="FungiDB:MGG_08379"/>
<dbReference type="eggNOG" id="KOG0158">
    <property type="taxonomic scope" value="Eukaryota"/>
</dbReference>
<dbReference type="HOGENOM" id="CLU_022195_0_2_1"/>
<dbReference type="InParanoid" id="G4MWB2"/>
<dbReference type="OMA" id="DPNRFHF"/>
<dbReference type="OrthoDB" id="1844152at2759"/>
<dbReference type="Proteomes" id="UP000009058">
    <property type="component" value="Chromosome 2"/>
</dbReference>
<dbReference type="GO" id="GO:0020037">
    <property type="term" value="F:heme binding"/>
    <property type="evidence" value="ECO:0007669"/>
    <property type="project" value="InterPro"/>
</dbReference>
<dbReference type="GO" id="GO:0005506">
    <property type="term" value="F:iron ion binding"/>
    <property type="evidence" value="ECO:0007669"/>
    <property type="project" value="InterPro"/>
</dbReference>
<dbReference type="GO" id="GO:0004497">
    <property type="term" value="F:monooxygenase activity"/>
    <property type="evidence" value="ECO:0007669"/>
    <property type="project" value="UniProtKB-KW"/>
</dbReference>
<dbReference type="GO" id="GO:0016705">
    <property type="term" value="F:oxidoreductase activity, acting on paired donors, with incorporation or reduction of molecular oxygen"/>
    <property type="evidence" value="ECO:0007669"/>
    <property type="project" value="InterPro"/>
</dbReference>
<dbReference type="GO" id="GO:0019748">
    <property type="term" value="P:secondary metabolic process"/>
    <property type="evidence" value="ECO:0007669"/>
    <property type="project" value="UniProtKB-ARBA"/>
</dbReference>
<dbReference type="CDD" id="cd11041">
    <property type="entry name" value="CYP503A1-like"/>
    <property type="match status" value="1"/>
</dbReference>
<dbReference type="Gene3D" id="1.10.630.10">
    <property type="entry name" value="Cytochrome P450"/>
    <property type="match status" value="1"/>
</dbReference>
<dbReference type="InterPro" id="IPR001128">
    <property type="entry name" value="Cyt_P450"/>
</dbReference>
<dbReference type="InterPro" id="IPR017972">
    <property type="entry name" value="Cyt_P450_CS"/>
</dbReference>
<dbReference type="InterPro" id="IPR002403">
    <property type="entry name" value="Cyt_P450_E_grp-IV"/>
</dbReference>
<dbReference type="InterPro" id="IPR036396">
    <property type="entry name" value="Cyt_P450_sf"/>
</dbReference>
<dbReference type="PANTHER" id="PTHR46206">
    <property type="entry name" value="CYTOCHROME P450"/>
    <property type="match status" value="1"/>
</dbReference>
<dbReference type="Pfam" id="PF00067">
    <property type="entry name" value="p450"/>
    <property type="match status" value="1"/>
</dbReference>
<dbReference type="PRINTS" id="PR00465">
    <property type="entry name" value="EP450IV"/>
</dbReference>
<dbReference type="SUPFAM" id="SSF48264">
    <property type="entry name" value="Cytochrome P450"/>
    <property type="match status" value="1"/>
</dbReference>
<dbReference type="PROSITE" id="PS00086">
    <property type="entry name" value="CYTOCHROME_P450"/>
    <property type="match status" value="1"/>
</dbReference>
<sequence>MLPRSLGHSTSELSPPFDGPNGVERYVSETRSLLRKGYEKYLRRGVPFQMRNPVEELGAQVVLPPKYLDEVKRAPTDLFSFEAYSEKAFLLNYSRAPRQTEAAAHIVRVDLTRNLGKLITFYSDFAIFEVCLPLVLIRDLGALVTDLWNESALYLDKTYNSEWQTKQAYEVVCGFVARVTSVAMVGAPLCRNPVWNRIVVETTMASFGAAQAIKDKYSARWRWLAPWSESIQKDLRRIRKESIELLKPLYEDRKAAVSRSDDVQGSSEMFRDTLYWLITSNQKDRSLSGITESQLFLSLAAIHTTSATLNSFVYDWIAHPEYHGEILAEVKETLAQVQLNGGKWTLQHVAMLRKLDSFMKESARINPIGFVSIQRYTLKPYTFKDGFQLPAGVSFVFHSDGVHHDADNYPDPEKFDAYRHLHLRETVDPNRFHFASVSDSALGFGAGNHACPGRFLSAIIMKFFLIQFMTAYEMKYEHGGIERLPNHDNSNTTAPNRTVNLLVRRCDGTSNNA</sequence>
<protein>
    <recommendedName>
        <fullName evidence="6">Cytochrome P450 monooxygenase CYP3</fullName>
        <ecNumber evidence="9">1.-.-.-</ecNumber>
    </recommendedName>
    <alternativeName>
        <fullName evidence="7">ACE1 cytochalasan biosynthesis cluster protein CYP3</fullName>
    </alternativeName>
</protein>
<evidence type="ECO:0000250" key="1">
    <source>
        <dbReference type="UniProtKB" id="P04798"/>
    </source>
</evidence>
<evidence type="ECO:0000256" key="2">
    <source>
        <dbReference type="SAM" id="MobiDB-lite"/>
    </source>
</evidence>
<evidence type="ECO:0000269" key="3">
    <source>
    </source>
</evidence>
<evidence type="ECO:0000269" key="4">
    <source>
    </source>
</evidence>
<evidence type="ECO:0000269" key="5">
    <source>
    </source>
</evidence>
<evidence type="ECO:0000303" key="6">
    <source>
    </source>
</evidence>
<evidence type="ECO:0000303" key="7">
    <source>
    </source>
</evidence>
<evidence type="ECO:0000305" key="8"/>
<evidence type="ECO:0000305" key="9">
    <source>
    </source>
</evidence>
<evidence type="ECO:0000305" key="10">
    <source>
    </source>
</evidence>
<feature type="chain" id="PRO_0000449438" description="Cytochrome P450 monooxygenase CYP3">
    <location>
        <begin position="1"/>
        <end position="513"/>
    </location>
</feature>
<feature type="region of interest" description="Disordered" evidence="2">
    <location>
        <begin position="1"/>
        <end position="21"/>
    </location>
</feature>
<feature type="binding site" description="axial binding residue" evidence="1">
    <location>
        <position position="451"/>
    </location>
    <ligand>
        <name>heme</name>
        <dbReference type="ChEBI" id="CHEBI:30413"/>
    </ligand>
    <ligandPart>
        <name>Fe</name>
        <dbReference type="ChEBI" id="CHEBI:18248"/>
    </ligandPart>
</feature>
<name>CYP3B_PYRO7</name>
<organism>
    <name type="scientific">Pyricularia oryzae (strain 70-15 / ATCC MYA-4617 / FGSC 8958)</name>
    <name type="common">Rice blast fungus</name>
    <name type="synonym">Magnaporthe oryzae</name>
    <dbReference type="NCBI Taxonomy" id="242507"/>
    <lineage>
        <taxon>Eukaryota</taxon>
        <taxon>Fungi</taxon>
        <taxon>Dikarya</taxon>
        <taxon>Ascomycota</taxon>
        <taxon>Pezizomycotina</taxon>
        <taxon>Sordariomycetes</taxon>
        <taxon>Sordariomycetidae</taxon>
        <taxon>Magnaporthales</taxon>
        <taxon>Pyriculariaceae</taxon>
        <taxon>Pyricularia</taxon>
    </lineage>
</organism>
<accession>G4MWB2</accession>
<keyword id="KW-0349">Heme</keyword>
<keyword id="KW-0408">Iron</keyword>
<keyword id="KW-0479">Metal-binding</keyword>
<keyword id="KW-0503">Monooxygenase</keyword>
<keyword id="KW-0560">Oxidoreductase</keyword>
<keyword id="KW-1185">Reference proteome</keyword>